<evidence type="ECO:0000255" key="1"/>
<evidence type="ECO:0000256" key="2">
    <source>
        <dbReference type="SAM" id="MobiDB-lite"/>
    </source>
</evidence>
<evidence type="ECO:0000305" key="3"/>
<accession>Q60QM8</accession>
<accession>A8Y0K5</accession>
<protein>
    <recommendedName>
        <fullName>DOMON domain-containing protein CBG21753</fullName>
    </recommendedName>
</protein>
<organism>
    <name type="scientific">Caenorhabditis briggsae</name>
    <dbReference type="NCBI Taxonomy" id="6238"/>
    <lineage>
        <taxon>Eukaryota</taxon>
        <taxon>Metazoa</taxon>
        <taxon>Ecdysozoa</taxon>
        <taxon>Nematoda</taxon>
        <taxon>Chromadorea</taxon>
        <taxon>Rhabditida</taxon>
        <taxon>Rhabditina</taxon>
        <taxon>Rhabditomorpha</taxon>
        <taxon>Rhabditoidea</taxon>
        <taxon>Rhabditidae</taxon>
        <taxon>Peloderinae</taxon>
        <taxon>Caenorhabditis</taxon>
    </lineage>
</organism>
<sequence>MIKSMILVALILAFASAKTCKYDSSGFQSYWRFANNSIMLQFMNTDIKNNQWTGIGFGDDKNNLVGVFFMVSNNQVTVRTGSTTEHGPPNFNQNGTNMGSSVSTQSALYFPEDETMSAVVQIPVQFQGRNLQSCQKWRWIKSGKIENGQLTRNSKSPKDKKVCPMECN</sequence>
<gene>
    <name type="ORF">CBG21753</name>
</gene>
<dbReference type="EMBL" id="HE600966">
    <property type="protein sequence ID" value="CAP38423.1"/>
    <property type="molecule type" value="Genomic_DNA"/>
</dbReference>
<dbReference type="RefSeq" id="XP_002632987.1">
    <property type="nucleotide sequence ID" value="XM_002632941.1"/>
</dbReference>
<dbReference type="FunCoup" id="Q60QM8">
    <property type="interactions" value="401"/>
</dbReference>
<dbReference type="STRING" id="6238.Q60QM8"/>
<dbReference type="EnsemblMetazoa" id="CBG21753.1">
    <property type="protein sequence ID" value="CBG21753.1"/>
    <property type="gene ID" value="WBGene00040447"/>
</dbReference>
<dbReference type="GeneID" id="8574984"/>
<dbReference type="KEGG" id="cbr:CBG_21753"/>
<dbReference type="CTD" id="8574984"/>
<dbReference type="WormBase" id="CBG21753">
    <property type="protein sequence ID" value="CBP05169"/>
    <property type="gene ID" value="WBGene00040447"/>
</dbReference>
<dbReference type="eggNOG" id="ENOG502TGCS">
    <property type="taxonomic scope" value="Eukaryota"/>
</dbReference>
<dbReference type="HOGENOM" id="CLU_1628544_0_0_1"/>
<dbReference type="InParanoid" id="Q60QM8"/>
<dbReference type="OMA" id="KVCPMEC"/>
<dbReference type="OrthoDB" id="5773714at2759"/>
<dbReference type="Proteomes" id="UP000008549">
    <property type="component" value="Unassembled WGS sequence"/>
</dbReference>
<dbReference type="GO" id="GO:0005576">
    <property type="term" value="C:extracellular region"/>
    <property type="evidence" value="ECO:0007669"/>
    <property type="project" value="UniProtKB-SubCell"/>
</dbReference>
<dbReference type="InterPro" id="IPR005018">
    <property type="entry name" value="DOMON_domain"/>
</dbReference>
<dbReference type="PANTHER" id="PTHR36516:SF3">
    <property type="entry name" value="DOMON DOMAIN-CONTAINING PROTEIN Y73F4A.2"/>
    <property type="match status" value="1"/>
</dbReference>
<dbReference type="PANTHER" id="PTHR36516">
    <property type="entry name" value="PROTEIN CBG04168-RELATED"/>
    <property type="match status" value="1"/>
</dbReference>
<dbReference type="Pfam" id="PF03351">
    <property type="entry name" value="DOMON"/>
    <property type="match status" value="1"/>
</dbReference>
<proteinExistence type="inferred from homology"/>
<feature type="signal peptide" evidence="1">
    <location>
        <begin position="1"/>
        <end position="17"/>
    </location>
</feature>
<feature type="chain" id="PRO_0000248562" description="DOMON domain-containing protein CBG21753">
    <location>
        <begin position="18"/>
        <end position="168"/>
    </location>
</feature>
<feature type="domain" description="DOMON">
    <location>
        <begin position="25"/>
        <end position="143"/>
    </location>
</feature>
<feature type="region of interest" description="Disordered" evidence="2">
    <location>
        <begin position="148"/>
        <end position="168"/>
    </location>
</feature>
<feature type="compositionally biased region" description="Basic and acidic residues" evidence="2">
    <location>
        <begin position="156"/>
        <end position="168"/>
    </location>
</feature>
<feature type="glycosylation site" description="N-linked (GlcNAc...) asparagine" evidence="1">
    <location>
        <position position="35"/>
    </location>
</feature>
<feature type="glycosylation site" description="N-linked (GlcNAc...) asparagine" evidence="1">
    <location>
        <position position="94"/>
    </location>
</feature>
<reference key="1">
    <citation type="journal article" date="2003" name="PLoS Biol.">
        <title>The genome sequence of Caenorhabditis briggsae: a platform for comparative genomics.</title>
        <authorList>
            <person name="Stein L.D."/>
            <person name="Bao Z."/>
            <person name="Blasiar D."/>
            <person name="Blumenthal T."/>
            <person name="Brent M.R."/>
            <person name="Chen N."/>
            <person name="Chinwalla A."/>
            <person name="Clarke L."/>
            <person name="Clee C."/>
            <person name="Coghlan A."/>
            <person name="Coulson A."/>
            <person name="D'Eustachio P."/>
            <person name="Fitch D.H.A."/>
            <person name="Fulton L.A."/>
            <person name="Fulton R.E."/>
            <person name="Griffiths-Jones S."/>
            <person name="Harris T.W."/>
            <person name="Hillier L.W."/>
            <person name="Kamath R."/>
            <person name="Kuwabara P.E."/>
            <person name="Mardis E.R."/>
            <person name="Marra M.A."/>
            <person name="Miner T.L."/>
            <person name="Minx P."/>
            <person name="Mullikin J.C."/>
            <person name="Plumb R.W."/>
            <person name="Rogers J."/>
            <person name="Schein J.E."/>
            <person name="Sohrmann M."/>
            <person name="Spieth J."/>
            <person name="Stajich J.E."/>
            <person name="Wei C."/>
            <person name="Willey D."/>
            <person name="Wilson R.K."/>
            <person name="Durbin R.M."/>
            <person name="Waterston R.H."/>
        </authorList>
    </citation>
    <scope>NUCLEOTIDE SEQUENCE [LARGE SCALE GENOMIC DNA]</scope>
    <source>
        <strain>AF16</strain>
    </source>
</reference>
<comment type="subcellular location">
    <subcellularLocation>
        <location evidence="3">Secreted</location>
    </subcellularLocation>
</comment>
<name>DMON1_CAEBR</name>
<keyword id="KW-0325">Glycoprotein</keyword>
<keyword id="KW-1185">Reference proteome</keyword>
<keyword id="KW-0964">Secreted</keyword>
<keyword id="KW-0732">Signal</keyword>